<accession>O35276</accession>
<proteinExistence type="evidence at transcript level"/>
<keyword id="KW-0106">Calcium</keyword>
<keyword id="KW-0217">Developmental protein</keyword>
<keyword id="KW-0221">Differentiation</keyword>
<keyword id="KW-1015">Disulfide bond</keyword>
<keyword id="KW-0325">Glycoprotein</keyword>
<keyword id="KW-0358">Heparin-binding</keyword>
<keyword id="KW-0472">Membrane</keyword>
<keyword id="KW-0479">Metal-binding</keyword>
<keyword id="KW-0524">Neurogenesis</keyword>
<keyword id="KW-0675">Receptor</keyword>
<keyword id="KW-1185">Reference proteome</keyword>
<keyword id="KW-0677">Repeat</keyword>
<keyword id="KW-0732">Signal</keyword>
<keyword id="KW-0812">Transmembrane</keyword>
<keyword id="KW-1133">Transmembrane helix</keyword>
<reference key="1">
    <citation type="journal article" date="1997" name="Cell">
        <title>Neuropilin is a semaphorin III receptor.</title>
        <authorList>
            <person name="Kolodkin A.L."/>
            <person name="Levengood D.V."/>
            <person name="Rowe E.G."/>
            <person name="Tai Y.-T."/>
            <person name="Giger R.J."/>
            <person name="Ginty D.D."/>
        </authorList>
    </citation>
    <scope>NUCLEOTIDE SEQUENCE [MRNA]</scope>
    <scope>TISSUE SPECIFICITY</scope>
    <source>
        <strain>Sprague-Dawley</strain>
    </source>
</reference>
<reference key="2">
    <citation type="journal article" date="2017" name="Front. Neurol.">
        <title>Expression of Semaphorins, Neuropilins, VEGF, and Tenascins in Rat and Human Primary Sensory Neurons after a Dorsal Root Injury.</title>
        <authorList>
            <person name="Lindholm T."/>
            <person name="Risling M."/>
            <person name="Carlstedt T."/>
            <person name="Hammarberg H."/>
            <person name="Wallquist W."/>
            <person name="Cullheim S."/>
            <person name="Skoeld M.K."/>
        </authorList>
    </citation>
    <scope>TISSUE SPECIFICITY</scope>
    <scope>INDUCTION BY INJURY</scope>
</reference>
<protein>
    <recommendedName>
        <fullName>Neuropilin-2</fullName>
    </recommendedName>
    <alternativeName>
        <fullName>Vascular endothelial cell growth factor 165 receptor 2</fullName>
    </alternativeName>
</protein>
<name>NRP2_RAT</name>
<sequence>MDMFPLTWIFLALYFSGHKVRSQQDPPCGGRLNSKDAGYITSPGYPQDYPSHQNCEWVVYAPEPNQKIVLNFNPHFEIEKHDCKYDFIEIRDGDSESADLLGKHCGNIAPPTIISSGSVLYIKFTSDYARQGAGFSLRYEIFKTGSEDCSKNFTSPNGTIESPGFPEKYPHNLDCTFTILAKPRMEIILQFLTFDLEHDPLQVGEGDCKYDWLDIWDGIPHVGPLIGKYCGTKTPSKLRSSTGILSLTFHTDMAVAKDGFSARYYLVHQEPPENFQCNAPLGMESGRIANEQISASSTFSDGRWTPQQSRLHGDDNGWTPNVDSNKEYLQVDLRFLTMLTAIATQGAISRETQKGYYVKSYKLEVSTNGEDWMVYRHGKNHKVFQANNDATELVLNKLHTPLLTRFIRIRPQTWHLGIALRLELFGCRVTDAPCSNMLGMLSGLIADTQISASSTREYLWSPSAARLVSSRSGWFPRNPQAQPGEEWLQVDLGTPKTVKGVIIQGARGGDSITAMEARAFVRKFKVSYSLNGKDWEYIQDPRTQQPKLFEGNMHYDTPDIRRFEPVPAQYVRVYPERWSPAGIGMRLEVLGCDWTDSKPTVETLGPTVKSEETTTPYPMDEDATECGENCSFEDDKDLQLPSGFNCNFDFPEETCGWMYDRAKWLQSTWISSANPNDRTFPDDKNFLKLQSDGGREGQFGRLISPPVHLPRSPVCMEFQYQAMGGHGVALQVVREARQESKLLWVIREDQGSEWKHGRIILPSYDMEYQIVFEGVIGKGRSGEISIDDIRISTDVPLENCMEPISAFAVDIPEIHGGEGYEDEIDDDYEGDWNNSSSTSGAGSPSSGKEKSWLYTLDPILITIIAMSSLGVLLGATCAGLLLYCTCSYSGLSSRSCTTLENYNFELYDGLKHKVKINHQKCCSEA</sequence>
<evidence type="ECO:0000250" key="1"/>
<evidence type="ECO:0000250" key="2">
    <source>
        <dbReference type="UniProtKB" id="O60462"/>
    </source>
</evidence>
<evidence type="ECO:0000255" key="3"/>
<evidence type="ECO:0000255" key="4">
    <source>
        <dbReference type="PROSITE-ProRule" id="PRU00059"/>
    </source>
</evidence>
<evidence type="ECO:0000255" key="5">
    <source>
        <dbReference type="PROSITE-ProRule" id="PRU00081"/>
    </source>
</evidence>
<evidence type="ECO:0000255" key="6">
    <source>
        <dbReference type="PROSITE-ProRule" id="PRU00128"/>
    </source>
</evidence>
<evidence type="ECO:0000256" key="7">
    <source>
        <dbReference type="SAM" id="MobiDB-lite"/>
    </source>
</evidence>
<evidence type="ECO:0000269" key="8">
    <source>
    </source>
</evidence>
<evidence type="ECO:0000269" key="9">
    <source>
    </source>
</evidence>
<evidence type="ECO:0000305" key="10"/>
<organism>
    <name type="scientific">Rattus norvegicus</name>
    <name type="common">Rat</name>
    <dbReference type="NCBI Taxonomy" id="10116"/>
    <lineage>
        <taxon>Eukaryota</taxon>
        <taxon>Metazoa</taxon>
        <taxon>Chordata</taxon>
        <taxon>Craniata</taxon>
        <taxon>Vertebrata</taxon>
        <taxon>Euteleostomi</taxon>
        <taxon>Mammalia</taxon>
        <taxon>Eutheria</taxon>
        <taxon>Euarchontoglires</taxon>
        <taxon>Glires</taxon>
        <taxon>Rodentia</taxon>
        <taxon>Myomorpha</taxon>
        <taxon>Muroidea</taxon>
        <taxon>Muridae</taxon>
        <taxon>Murinae</taxon>
        <taxon>Rattus</taxon>
    </lineage>
</organism>
<feature type="signal peptide" evidence="3">
    <location>
        <begin position="1"/>
        <end position="22"/>
    </location>
</feature>
<feature type="chain" id="PRO_0000021865" description="Neuropilin-2">
    <location>
        <begin position="23"/>
        <end position="925"/>
    </location>
</feature>
<feature type="topological domain" description="Extracellular" evidence="3">
    <location>
        <begin position="23"/>
        <end position="858"/>
    </location>
</feature>
<feature type="transmembrane region" description="Helical" evidence="3">
    <location>
        <begin position="859"/>
        <end position="883"/>
    </location>
</feature>
<feature type="topological domain" description="Cytoplasmic" evidence="3">
    <location>
        <begin position="884"/>
        <end position="925"/>
    </location>
</feature>
<feature type="domain" description="CUB 1" evidence="4">
    <location>
        <begin position="28"/>
        <end position="142"/>
    </location>
</feature>
<feature type="domain" description="CUB 2" evidence="4">
    <location>
        <begin position="149"/>
        <end position="267"/>
    </location>
</feature>
<feature type="domain" description="F5/8 type C 1" evidence="5">
    <location>
        <begin position="277"/>
        <end position="427"/>
    </location>
</feature>
<feature type="domain" description="F5/8 type C 2" evidence="5">
    <location>
        <begin position="434"/>
        <end position="592"/>
    </location>
</feature>
<feature type="domain" description="MAM" evidence="6">
    <location>
        <begin position="642"/>
        <end position="802"/>
    </location>
</feature>
<feature type="region of interest" description="Disordered" evidence="7">
    <location>
        <begin position="297"/>
        <end position="317"/>
    </location>
</feature>
<feature type="region of interest" description="Disordered" evidence="7">
    <location>
        <begin position="601"/>
        <end position="621"/>
    </location>
</feature>
<feature type="region of interest" description="Disordered" evidence="7">
    <location>
        <begin position="820"/>
        <end position="849"/>
    </location>
</feature>
<feature type="compositionally biased region" description="Polar residues" evidence="7">
    <location>
        <begin position="297"/>
        <end position="310"/>
    </location>
</feature>
<feature type="compositionally biased region" description="Acidic residues" evidence="7">
    <location>
        <begin position="820"/>
        <end position="830"/>
    </location>
</feature>
<feature type="compositionally biased region" description="Low complexity" evidence="7">
    <location>
        <begin position="835"/>
        <end position="846"/>
    </location>
</feature>
<feature type="binding site" evidence="2">
    <location>
        <position position="197"/>
    </location>
    <ligand>
        <name>Ca(2+)</name>
        <dbReference type="ChEBI" id="CHEBI:29108"/>
    </ligand>
</feature>
<feature type="binding site" evidence="2">
    <location>
        <position position="211"/>
    </location>
    <ligand>
        <name>Ca(2+)</name>
        <dbReference type="ChEBI" id="CHEBI:29108"/>
    </ligand>
</feature>
<feature type="binding site" evidence="2">
    <location>
        <position position="252"/>
    </location>
    <ligand>
        <name>Ca(2+)</name>
        <dbReference type="ChEBI" id="CHEBI:29108"/>
    </ligand>
</feature>
<feature type="glycosylation site" description="N-linked (GlcNAc...) asparagine" evidence="3">
    <location>
        <position position="152"/>
    </location>
</feature>
<feature type="glycosylation site" description="N-linked (GlcNAc...) asparagine" evidence="3">
    <location>
        <position position="157"/>
    </location>
</feature>
<feature type="glycosylation site" description="N-linked (GlcNAc...) asparagine" evidence="3">
    <location>
        <position position="629"/>
    </location>
</feature>
<feature type="glycosylation site" description="N-linked (GlcNAc...) asparagine" evidence="3">
    <location>
        <position position="833"/>
    </location>
</feature>
<feature type="glycosylation site" description="N-linked (GlcNAc...) asparagine" evidence="3">
    <location>
        <position position="834"/>
    </location>
</feature>
<feature type="disulfide bond" evidence="2">
    <location>
        <begin position="28"/>
        <end position="55"/>
    </location>
</feature>
<feature type="disulfide bond" evidence="2">
    <location>
        <begin position="83"/>
        <end position="105"/>
    </location>
</feature>
<feature type="disulfide bond" evidence="2">
    <location>
        <begin position="149"/>
        <end position="175"/>
    </location>
</feature>
<feature type="disulfide bond" evidence="2">
    <location>
        <begin position="208"/>
        <end position="230"/>
    </location>
</feature>
<feature type="disulfide bond" evidence="2">
    <location>
        <begin position="277"/>
        <end position="427"/>
    </location>
</feature>
<feature type="disulfide bond" evidence="2">
    <location>
        <begin position="434"/>
        <end position="592"/>
    </location>
</feature>
<comment type="function">
    <text>High affinity receptor for semaphorins 3C, 3F, VEGF-165 and VEGF-145 isoforms of VEGF, and the PLGF-2 isoform of PGF.</text>
</comment>
<comment type="subunit">
    <text evidence="1">Heterodimer with NRP1. Binds PLXNB1 (By similarity).</text>
</comment>
<comment type="subcellular location">
    <subcellularLocation>
        <location evidence="2">Membrane</location>
        <topology evidence="2">Single-pass type I membrane protein</topology>
    </subcellularLocation>
</comment>
<comment type="tissue specificity">
    <text evidence="8 9">Found in certain neuronal populations of the CNS, including dorsal root ganglia, and in other non-neuronal tissues including mesenchymal tissue lining in the ribs.</text>
</comment>
<comment type="induction">
    <text evidence="8">Increased in dorsal root ganglia in response to injury caused by dorsal rhizotomy (PubMed:28270793). Increased in dorsal root ganglia in response to sciatic transection injury (PubMed:28270793). Transiently increased in dorsal root ganglia in response to sciatic nerve crush injury, returning to comparable levels 42 days post-injury (PubMed:28270793).</text>
</comment>
<comment type="domain">
    <text evidence="1">The tandem CUB domains mediate binding to semaphorin, while the tandem F5/8 domains are responsible for heparin and VEGF binding.</text>
</comment>
<comment type="similarity">
    <text evidence="10">Belongs to the neuropilin family.</text>
</comment>
<dbReference type="EMBL" id="AF016297">
    <property type="protein sequence ID" value="AAC53338.1"/>
    <property type="molecule type" value="mRNA"/>
</dbReference>
<dbReference type="RefSeq" id="NP_110496.1">
    <property type="nucleotide sequence ID" value="NM_030869.4"/>
</dbReference>
<dbReference type="SMR" id="O35276"/>
<dbReference type="FunCoup" id="O35276">
    <property type="interactions" value="1146"/>
</dbReference>
<dbReference type="STRING" id="10116.ENSRNOP00000047206"/>
<dbReference type="GlyCosmos" id="O35276">
    <property type="glycosylation" value="5 sites, No reported glycans"/>
</dbReference>
<dbReference type="GlyGen" id="O35276">
    <property type="glycosylation" value="5 sites"/>
</dbReference>
<dbReference type="PhosphoSitePlus" id="O35276"/>
<dbReference type="jPOST" id="O35276"/>
<dbReference type="PaxDb" id="10116-ENSRNOP00000047206"/>
<dbReference type="GeneID" id="81527"/>
<dbReference type="KEGG" id="rno:81527"/>
<dbReference type="UCSC" id="RGD:621442">
    <property type="organism name" value="rat"/>
</dbReference>
<dbReference type="AGR" id="RGD:621442"/>
<dbReference type="CTD" id="8828"/>
<dbReference type="RGD" id="621442">
    <property type="gene designation" value="Nrp2"/>
</dbReference>
<dbReference type="VEuPathDB" id="HostDB:ENSRNOG00000031232"/>
<dbReference type="eggNOG" id="ENOG502QVB7">
    <property type="taxonomic scope" value="Eukaryota"/>
</dbReference>
<dbReference type="HOGENOM" id="CLU_015228_6_1_1"/>
<dbReference type="InParanoid" id="O35276"/>
<dbReference type="OrthoDB" id="6155811at2759"/>
<dbReference type="PhylomeDB" id="O35276"/>
<dbReference type="Reactome" id="R-RNO-194306">
    <property type="pathway name" value="Neurophilin interactions with VEGF and VEGFR"/>
</dbReference>
<dbReference type="PRO" id="PR:O35276"/>
<dbReference type="Proteomes" id="UP000002494">
    <property type="component" value="Chromosome 9"/>
</dbReference>
<dbReference type="Bgee" id="ENSRNOG00000031232">
    <property type="expression patterns" value="Expressed in lung and 18 other cell types or tissues"/>
</dbReference>
<dbReference type="GO" id="GO:0030424">
    <property type="term" value="C:axon"/>
    <property type="evidence" value="ECO:0000266"/>
    <property type="project" value="RGD"/>
</dbReference>
<dbReference type="GO" id="GO:0098978">
    <property type="term" value="C:glutamatergic synapse"/>
    <property type="evidence" value="ECO:0000266"/>
    <property type="project" value="RGD"/>
</dbReference>
<dbReference type="GO" id="GO:0005886">
    <property type="term" value="C:plasma membrane"/>
    <property type="evidence" value="ECO:0000318"/>
    <property type="project" value="GO_Central"/>
</dbReference>
<dbReference type="GO" id="GO:0045211">
    <property type="term" value="C:postsynaptic membrane"/>
    <property type="evidence" value="ECO:0000266"/>
    <property type="project" value="RGD"/>
</dbReference>
<dbReference type="GO" id="GO:0008201">
    <property type="term" value="F:heparin binding"/>
    <property type="evidence" value="ECO:0007669"/>
    <property type="project" value="UniProtKB-KW"/>
</dbReference>
<dbReference type="GO" id="GO:0046872">
    <property type="term" value="F:metal ion binding"/>
    <property type="evidence" value="ECO:0007669"/>
    <property type="project" value="UniProtKB-KW"/>
</dbReference>
<dbReference type="GO" id="GO:0017154">
    <property type="term" value="F:semaphorin receptor activity"/>
    <property type="evidence" value="ECO:0000266"/>
    <property type="project" value="RGD"/>
</dbReference>
<dbReference type="GO" id="GO:0005021">
    <property type="term" value="F:vascular endothelial growth factor receptor activity"/>
    <property type="evidence" value="ECO:0007669"/>
    <property type="project" value="InterPro"/>
</dbReference>
<dbReference type="GO" id="GO:0001525">
    <property type="term" value="P:angiogenesis"/>
    <property type="evidence" value="ECO:0007669"/>
    <property type="project" value="InterPro"/>
</dbReference>
<dbReference type="GO" id="GO:0048846">
    <property type="term" value="P:axon extension involved in axon guidance"/>
    <property type="evidence" value="ECO:0000266"/>
    <property type="project" value="RGD"/>
</dbReference>
<dbReference type="GO" id="GO:0007411">
    <property type="term" value="P:axon guidance"/>
    <property type="evidence" value="ECO:0000270"/>
    <property type="project" value="RGD"/>
</dbReference>
<dbReference type="GO" id="GO:1990830">
    <property type="term" value="P:cellular response to leukemia inhibitory factor"/>
    <property type="evidence" value="ECO:0000266"/>
    <property type="project" value="RGD"/>
</dbReference>
<dbReference type="GO" id="GO:1904835">
    <property type="term" value="P:dorsal root ganglion morphogenesis"/>
    <property type="evidence" value="ECO:0000266"/>
    <property type="project" value="RGD"/>
</dbReference>
<dbReference type="GO" id="GO:0021612">
    <property type="term" value="P:facial nerve structural organization"/>
    <property type="evidence" value="ECO:0000266"/>
    <property type="project" value="RGD"/>
</dbReference>
<dbReference type="GO" id="GO:1903375">
    <property type="term" value="P:facioacoustic ganglion development"/>
    <property type="evidence" value="ECO:0000266"/>
    <property type="project" value="RGD"/>
</dbReference>
<dbReference type="GO" id="GO:0021828">
    <property type="term" value="P:gonadotrophin-releasing hormone neuronal migration to the hypothalamus"/>
    <property type="evidence" value="ECO:0000266"/>
    <property type="project" value="RGD"/>
</dbReference>
<dbReference type="GO" id="GO:0007507">
    <property type="term" value="P:heart development"/>
    <property type="evidence" value="ECO:0000266"/>
    <property type="project" value="RGD"/>
</dbReference>
<dbReference type="GO" id="GO:0050919">
    <property type="term" value="P:negative chemotaxis"/>
    <property type="evidence" value="ECO:0000266"/>
    <property type="project" value="RGD"/>
</dbReference>
<dbReference type="GO" id="GO:0021675">
    <property type="term" value="P:nerve development"/>
    <property type="evidence" value="ECO:0000266"/>
    <property type="project" value="RGD"/>
</dbReference>
<dbReference type="GO" id="GO:1901166">
    <property type="term" value="P:neural crest cell migration involved in autonomic nervous system development"/>
    <property type="evidence" value="ECO:0000266"/>
    <property type="project" value="RGD"/>
</dbReference>
<dbReference type="GO" id="GO:0001764">
    <property type="term" value="P:neuron migration"/>
    <property type="evidence" value="ECO:0000266"/>
    <property type="project" value="RGD"/>
</dbReference>
<dbReference type="GO" id="GO:0003148">
    <property type="term" value="P:outflow tract septum morphogenesis"/>
    <property type="evidence" value="ECO:0000266"/>
    <property type="project" value="RGD"/>
</dbReference>
<dbReference type="GO" id="GO:0099175">
    <property type="term" value="P:regulation of postsynapse organization"/>
    <property type="evidence" value="ECO:0000266"/>
    <property type="project" value="RGD"/>
</dbReference>
<dbReference type="GO" id="GO:0071526">
    <property type="term" value="P:semaphorin-plexin signaling pathway"/>
    <property type="evidence" value="ECO:0000266"/>
    <property type="project" value="RGD"/>
</dbReference>
<dbReference type="GO" id="GO:0097374">
    <property type="term" value="P:sensory neuron axon guidance"/>
    <property type="evidence" value="ECO:0000266"/>
    <property type="project" value="RGD"/>
</dbReference>
<dbReference type="GO" id="GO:0061549">
    <property type="term" value="P:sympathetic ganglion development"/>
    <property type="evidence" value="ECO:0000266"/>
    <property type="project" value="RGD"/>
</dbReference>
<dbReference type="GO" id="GO:0097490">
    <property type="term" value="P:sympathetic neuron projection extension"/>
    <property type="evidence" value="ECO:0000266"/>
    <property type="project" value="RGD"/>
</dbReference>
<dbReference type="GO" id="GO:0097491">
    <property type="term" value="P:sympathetic neuron projection guidance"/>
    <property type="evidence" value="ECO:0000266"/>
    <property type="project" value="RGD"/>
</dbReference>
<dbReference type="GO" id="GO:0061551">
    <property type="term" value="P:trigeminal ganglion development"/>
    <property type="evidence" value="ECO:0000266"/>
    <property type="project" value="RGD"/>
</dbReference>
<dbReference type="GO" id="GO:0036484">
    <property type="term" value="P:trunk neural crest cell migration"/>
    <property type="evidence" value="ECO:0000266"/>
    <property type="project" value="RGD"/>
</dbReference>
<dbReference type="GO" id="GO:0036486">
    <property type="term" value="P:ventral trunk neural crest cell migration"/>
    <property type="evidence" value="ECO:0000266"/>
    <property type="project" value="RGD"/>
</dbReference>
<dbReference type="GO" id="GO:0021649">
    <property type="term" value="P:vestibulocochlear nerve structural organization"/>
    <property type="evidence" value="ECO:0000266"/>
    <property type="project" value="RGD"/>
</dbReference>
<dbReference type="CDD" id="cd00041">
    <property type="entry name" value="CUB"/>
    <property type="match status" value="2"/>
</dbReference>
<dbReference type="CDD" id="cd00057">
    <property type="entry name" value="FA58C"/>
    <property type="match status" value="2"/>
</dbReference>
<dbReference type="CDD" id="cd06263">
    <property type="entry name" value="MAM"/>
    <property type="match status" value="1"/>
</dbReference>
<dbReference type="FunFam" id="2.60.120.260:FF:000002">
    <property type="entry name" value="Coagulation factor VIII"/>
    <property type="match status" value="1"/>
</dbReference>
<dbReference type="FunFam" id="2.60.120.200:FF:000042">
    <property type="entry name" value="Neuropilin"/>
    <property type="match status" value="1"/>
</dbReference>
<dbReference type="FunFam" id="2.60.120.260:FF:000013">
    <property type="entry name" value="Neuropilin"/>
    <property type="match status" value="1"/>
</dbReference>
<dbReference type="FunFam" id="2.60.120.290:FF:000003">
    <property type="entry name" value="Neuropilin"/>
    <property type="match status" value="1"/>
</dbReference>
<dbReference type="FunFam" id="2.60.120.290:FF:000010">
    <property type="entry name" value="Neuropilin"/>
    <property type="match status" value="1"/>
</dbReference>
<dbReference type="Gene3D" id="2.60.120.200">
    <property type="match status" value="1"/>
</dbReference>
<dbReference type="Gene3D" id="2.60.120.260">
    <property type="entry name" value="Galactose-binding domain-like"/>
    <property type="match status" value="2"/>
</dbReference>
<dbReference type="Gene3D" id="2.60.120.290">
    <property type="entry name" value="Spermadhesin, CUB domain"/>
    <property type="match status" value="2"/>
</dbReference>
<dbReference type="InterPro" id="IPR013320">
    <property type="entry name" value="ConA-like_dom_sf"/>
</dbReference>
<dbReference type="InterPro" id="IPR000859">
    <property type="entry name" value="CUB_dom"/>
</dbReference>
<dbReference type="InterPro" id="IPR000421">
    <property type="entry name" value="FA58C"/>
</dbReference>
<dbReference type="InterPro" id="IPR008979">
    <property type="entry name" value="Galactose-bd-like_sf"/>
</dbReference>
<dbReference type="InterPro" id="IPR000998">
    <property type="entry name" value="MAM_dom"/>
</dbReference>
<dbReference type="InterPro" id="IPR014648">
    <property type="entry name" value="Neuropilin"/>
</dbReference>
<dbReference type="InterPro" id="IPR022579">
    <property type="entry name" value="Neuropilin_C"/>
</dbReference>
<dbReference type="InterPro" id="IPR050633">
    <property type="entry name" value="Neuropilin_MCO_CoagFactor"/>
</dbReference>
<dbReference type="InterPro" id="IPR035914">
    <property type="entry name" value="Sperma_CUB_dom_sf"/>
</dbReference>
<dbReference type="PANTHER" id="PTHR46806">
    <property type="entry name" value="F5/8 TYPE C DOMAIN-CONTAINING PROTEIN"/>
    <property type="match status" value="1"/>
</dbReference>
<dbReference type="PANTHER" id="PTHR46806:SF2">
    <property type="entry name" value="NEUROPILIN-2"/>
    <property type="match status" value="1"/>
</dbReference>
<dbReference type="Pfam" id="PF00431">
    <property type="entry name" value="CUB"/>
    <property type="match status" value="2"/>
</dbReference>
<dbReference type="Pfam" id="PF11980">
    <property type="entry name" value="DUF3481"/>
    <property type="match status" value="1"/>
</dbReference>
<dbReference type="Pfam" id="PF00754">
    <property type="entry name" value="F5_F8_type_C"/>
    <property type="match status" value="2"/>
</dbReference>
<dbReference type="Pfam" id="PF00629">
    <property type="entry name" value="MAM"/>
    <property type="match status" value="1"/>
</dbReference>
<dbReference type="PIRSF" id="PIRSF036960">
    <property type="entry name" value="Neuropilin"/>
    <property type="match status" value="1"/>
</dbReference>
<dbReference type="PRINTS" id="PR00020">
    <property type="entry name" value="MAMDOMAIN"/>
</dbReference>
<dbReference type="SMART" id="SM00042">
    <property type="entry name" value="CUB"/>
    <property type="match status" value="2"/>
</dbReference>
<dbReference type="SMART" id="SM00231">
    <property type="entry name" value="FA58C"/>
    <property type="match status" value="2"/>
</dbReference>
<dbReference type="SMART" id="SM00137">
    <property type="entry name" value="MAM"/>
    <property type="match status" value="1"/>
</dbReference>
<dbReference type="SUPFAM" id="SSF49899">
    <property type="entry name" value="Concanavalin A-like lectins/glucanases"/>
    <property type="match status" value="1"/>
</dbReference>
<dbReference type="SUPFAM" id="SSF49785">
    <property type="entry name" value="Galactose-binding domain-like"/>
    <property type="match status" value="2"/>
</dbReference>
<dbReference type="SUPFAM" id="SSF49854">
    <property type="entry name" value="Spermadhesin, CUB domain"/>
    <property type="match status" value="2"/>
</dbReference>
<dbReference type="PROSITE" id="PS01180">
    <property type="entry name" value="CUB"/>
    <property type="match status" value="2"/>
</dbReference>
<dbReference type="PROSITE" id="PS01285">
    <property type="entry name" value="FA58C_1"/>
    <property type="match status" value="2"/>
</dbReference>
<dbReference type="PROSITE" id="PS01286">
    <property type="entry name" value="FA58C_2"/>
    <property type="match status" value="2"/>
</dbReference>
<dbReference type="PROSITE" id="PS50022">
    <property type="entry name" value="FA58C_3"/>
    <property type="match status" value="2"/>
</dbReference>
<dbReference type="PROSITE" id="PS50060">
    <property type="entry name" value="MAM_2"/>
    <property type="match status" value="1"/>
</dbReference>
<gene>
    <name type="primary">Nrp2</name>
</gene>